<feature type="chain" id="PRO_1000132416" description="Fumarate reductase subunit D">
    <location>
        <begin position="1"/>
        <end position="121"/>
    </location>
</feature>
<feature type="transmembrane region" description="Helical" evidence="1">
    <location>
        <begin position="22"/>
        <end position="42"/>
    </location>
</feature>
<feature type="transmembrane region" description="Helical" evidence="1">
    <location>
        <begin position="57"/>
        <end position="77"/>
    </location>
</feature>
<feature type="transmembrane region" description="Helical" evidence="1">
    <location>
        <begin position="100"/>
        <end position="120"/>
    </location>
</feature>
<sequence length="121" mass="13282">MINYSPKRSDEPIWWGLFGAGGVWFAMITPVTVLLMGILLPLHGFGVVDIGYDKVYAFVSHPIGGAFTVLSLSLPMWHAMHRVHHGLHDLQIHLGTVGKYACYLAAALVTVLATVWVIQLS</sequence>
<accession>A4Y2A0</accession>
<organism>
    <name type="scientific">Shewanella putrefaciens (strain CN-32 / ATCC BAA-453)</name>
    <dbReference type="NCBI Taxonomy" id="319224"/>
    <lineage>
        <taxon>Bacteria</taxon>
        <taxon>Pseudomonadati</taxon>
        <taxon>Pseudomonadota</taxon>
        <taxon>Gammaproteobacteria</taxon>
        <taxon>Alteromonadales</taxon>
        <taxon>Shewanellaceae</taxon>
        <taxon>Shewanella</taxon>
    </lineage>
</organism>
<name>FRDD_SHEPC</name>
<comment type="function">
    <text evidence="1">Anchors the catalytic components of the fumarate reductase complex to the cell membrane, binds quinones.</text>
</comment>
<comment type="subunit">
    <text evidence="1">Part of an enzyme complex containing four subunits: a flavoprotein (FrdA), an iron-sulfur protein (FrdB), and two hydrophobic anchor proteins (FrdC and FrdD).</text>
</comment>
<comment type="subcellular location">
    <subcellularLocation>
        <location evidence="1">Cell inner membrane</location>
        <topology evidence="1">Multi-pass membrane protein</topology>
    </subcellularLocation>
</comment>
<comment type="similarity">
    <text evidence="1">Belongs to the FrdD family.</text>
</comment>
<gene>
    <name evidence="1" type="primary">frdD</name>
    <name type="ordered locus">Sputcn32_0351</name>
</gene>
<proteinExistence type="inferred from homology"/>
<reference key="1">
    <citation type="submission" date="2007-04" db="EMBL/GenBank/DDBJ databases">
        <title>Complete sequence of Shewanella putrefaciens CN-32.</title>
        <authorList>
            <consortium name="US DOE Joint Genome Institute"/>
            <person name="Copeland A."/>
            <person name="Lucas S."/>
            <person name="Lapidus A."/>
            <person name="Barry K."/>
            <person name="Detter J.C."/>
            <person name="Glavina del Rio T."/>
            <person name="Hammon N."/>
            <person name="Israni S."/>
            <person name="Dalin E."/>
            <person name="Tice H."/>
            <person name="Pitluck S."/>
            <person name="Chain P."/>
            <person name="Malfatti S."/>
            <person name="Shin M."/>
            <person name="Vergez L."/>
            <person name="Schmutz J."/>
            <person name="Larimer F."/>
            <person name="Land M."/>
            <person name="Hauser L."/>
            <person name="Kyrpides N."/>
            <person name="Mikhailova N."/>
            <person name="Romine M.F."/>
            <person name="Fredrickson J."/>
            <person name="Tiedje J."/>
            <person name="Richardson P."/>
        </authorList>
    </citation>
    <scope>NUCLEOTIDE SEQUENCE [LARGE SCALE GENOMIC DNA]</scope>
    <source>
        <strain>CN-32 / ATCC BAA-453</strain>
    </source>
</reference>
<protein>
    <recommendedName>
        <fullName evidence="1">Fumarate reductase subunit D</fullName>
    </recommendedName>
    <alternativeName>
        <fullName evidence="1">Quinol-fumarate reductase subunit D</fullName>
        <shortName evidence="1">QFR subunit D</shortName>
    </alternativeName>
</protein>
<evidence type="ECO:0000255" key="1">
    <source>
        <dbReference type="HAMAP-Rule" id="MF_00709"/>
    </source>
</evidence>
<keyword id="KW-0997">Cell inner membrane</keyword>
<keyword id="KW-1003">Cell membrane</keyword>
<keyword id="KW-0472">Membrane</keyword>
<keyword id="KW-0812">Transmembrane</keyword>
<keyword id="KW-1133">Transmembrane helix</keyword>
<dbReference type="EMBL" id="CP000681">
    <property type="protein sequence ID" value="ABP74083.1"/>
    <property type="molecule type" value="Genomic_DNA"/>
</dbReference>
<dbReference type="SMR" id="A4Y2A0"/>
<dbReference type="STRING" id="319224.Sputcn32_0351"/>
<dbReference type="KEGG" id="spc:Sputcn32_0351"/>
<dbReference type="eggNOG" id="COG3080">
    <property type="taxonomic scope" value="Bacteria"/>
</dbReference>
<dbReference type="HOGENOM" id="CLU_168367_0_0_6"/>
<dbReference type="GO" id="GO:0045283">
    <property type="term" value="C:fumarate reductase complex"/>
    <property type="evidence" value="ECO:0007669"/>
    <property type="project" value="UniProtKB-UniRule"/>
</dbReference>
<dbReference type="GO" id="GO:0005886">
    <property type="term" value="C:plasma membrane"/>
    <property type="evidence" value="ECO:0007669"/>
    <property type="project" value="UniProtKB-SubCell"/>
</dbReference>
<dbReference type="GO" id="GO:0000104">
    <property type="term" value="F:succinate dehydrogenase activity"/>
    <property type="evidence" value="ECO:0007669"/>
    <property type="project" value="UniProtKB-UniRule"/>
</dbReference>
<dbReference type="GO" id="GO:0006106">
    <property type="term" value="P:fumarate metabolic process"/>
    <property type="evidence" value="ECO:0007669"/>
    <property type="project" value="InterPro"/>
</dbReference>
<dbReference type="CDD" id="cd00547">
    <property type="entry name" value="QFR_TypeD_subunitD"/>
    <property type="match status" value="1"/>
</dbReference>
<dbReference type="Gene3D" id="1.20.1300.10">
    <property type="entry name" value="Fumarate reductase/succinate dehydrogenase, transmembrane subunit"/>
    <property type="match status" value="1"/>
</dbReference>
<dbReference type="HAMAP" id="MF_00709">
    <property type="entry name" value="Fumarate_red_D"/>
    <property type="match status" value="1"/>
</dbReference>
<dbReference type="InterPro" id="IPR003418">
    <property type="entry name" value="Fumarate_red_D"/>
</dbReference>
<dbReference type="InterPro" id="IPR034804">
    <property type="entry name" value="SQR/QFR_C/D"/>
</dbReference>
<dbReference type="NCBIfam" id="NF003977">
    <property type="entry name" value="PRK05470.1-1"/>
    <property type="match status" value="1"/>
</dbReference>
<dbReference type="Pfam" id="PF02313">
    <property type="entry name" value="Fumarate_red_D"/>
    <property type="match status" value="1"/>
</dbReference>
<dbReference type="PIRSF" id="PIRSF000179">
    <property type="entry name" value="FrdD"/>
    <property type="match status" value="1"/>
</dbReference>
<dbReference type="SUPFAM" id="SSF81343">
    <property type="entry name" value="Fumarate reductase respiratory complex transmembrane subunits"/>
    <property type="match status" value="1"/>
</dbReference>